<reference evidence="3" key="1">
    <citation type="submission" date="2006-06" db="EMBL/GenBank/DDBJ databases">
        <authorList>
            <consortium name="NIH - Mammalian Gene Collection (MGC) project"/>
        </authorList>
    </citation>
    <scope>NUCLEOTIDE SEQUENCE [LARGE SCALE MRNA]</scope>
    <source>
        <strain evidence="3">Hereford</strain>
        <tissue evidence="3">Ascending colon</tissue>
    </source>
</reference>
<name>EID2_BOVIN</name>
<feature type="chain" id="PRO_0000315900" description="EP300-interacting inhibitor of differentiation 2">
    <location>
        <begin position="1"/>
        <end position="219"/>
    </location>
</feature>
<feature type="region of interest" description="Disordered" evidence="2">
    <location>
        <begin position="1"/>
        <end position="71"/>
    </location>
</feature>
<feature type="region of interest" description="Disordered" evidence="2">
    <location>
        <begin position="95"/>
        <end position="115"/>
    </location>
</feature>
<feature type="compositionally biased region" description="Basic and acidic residues" evidence="2">
    <location>
        <begin position="20"/>
        <end position="34"/>
    </location>
</feature>
<feature type="modified residue" description="Omega-N-methylarginine" evidence="1">
    <location>
        <position position="75"/>
    </location>
</feature>
<comment type="function">
    <text evidence="1">Interacts with EP300 and acts as a repressor of MYOD-dependent transcription and muscle differentiation. Inhibits EP300 histone acetyltransferase activity. Acts as a repressor of TGFB/SMAD transcriptional responses. May act as a repressor of the TGFB/SMAD3-dependent signaling by selectively blocking formation of TGFB-induced SMAD3-SMAD4 complex (By similarity).</text>
</comment>
<comment type="subunit">
    <text evidence="1">Heterodimer with EID2B. Interacts with the C-terminus of EP300. Interacts with HDAC1 and HDAC2. Interacts with SMAD2, SMAD4 and with the MH2 domain of SMAD3 (By similarity).</text>
</comment>
<comment type="subcellular location">
    <subcellularLocation>
        <location evidence="1">Nucleus</location>
    </subcellularLocation>
</comment>
<comment type="domain">
    <text evidence="1">The N-terminal portion of EID2 is required for nuclear localization.</text>
</comment>
<accession>Q17QW4</accession>
<proteinExistence type="evidence at transcript level"/>
<sequence length="219" mass="23882">MSELPADQGVPPAGAANDNGDVRQAEVGGRRREPAPAQPVAARDRPMAAAVEGSMASPVEGPVPEAREGPMAASREGLGAAAREARMAEVARLLAEPAEEEGPEGRPRSRPGNGPGLAALPYLRLRHPLGVLGINYQQFLRHYLEHYPIAPGRIQELEGRRRRFVEACRAREAAFDAEYQRNPQRMDFDILTFSITLTASEIINPLIEELGCDKFISRE</sequence>
<dbReference type="EMBL" id="BC118143">
    <property type="protein sequence ID" value="AAI18144.1"/>
    <property type="molecule type" value="mRNA"/>
</dbReference>
<dbReference type="RefSeq" id="NP_001071517.1">
    <property type="nucleotide sequence ID" value="NM_001078049.1"/>
</dbReference>
<dbReference type="SMR" id="Q17QW4"/>
<dbReference type="FunCoup" id="Q17QW4">
    <property type="interactions" value="638"/>
</dbReference>
<dbReference type="STRING" id="9913.ENSBTAP00000048116"/>
<dbReference type="PaxDb" id="9913-ENSBTAP00000048116"/>
<dbReference type="GeneID" id="615269"/>
<dbReference type="KEGG" id="bta:615269"/>
<dbReference type="CTD" id="163126"/>
<dbReference type="VEuPathDB" id="HostDB:ENSBTAG00000015644"/>
<dbReference type="eggNOG" id="ENOG502RU2W">
    <property type="taxonomic scope" value="Eukaryota"/>
</dbReference>
<dbReference type="HOGENOM" id="CLU_102589_0_0_1"/>
<dbReference type="InParanoid" id="Q17QW4"/>
<dbReference type="OMA" id="FDAEYMR"/>
<dbReference type="OrthoDB" id="9838394at2759"/>
<dbReference type="TreeFam" id="TF337633"/>
<dbReference type="Proteomes" id="UP000009136">
    <property type="component" value="Chromosome 18"/>
</dbReference>
<dbReference type="Bgee" id="ENSBTAG00000015644">
    <property type="expression patterns" value="Expressed in retina and 98 other cell types or tissues"/>
</dbReference>
<dbReference type="GO" id="GO:0005654">
    <property type="term" value="C:nucleoplasm"/>
    <property type="evidence" value="ECO:0000318"/>
    <property type="project" value="GO_Central"/>
</dbReference>
<dbReference type="GO" id="GO:0003714">
    <property type="term" value="F:transcription corepressor activity"/>
    <property type="evidence" value="ECO:0000318"/>
    <property type="project" value="GO_Central"/>
</dbReference>
<dbReference type="GO" id="GO:0030154">
    <property type="term" value="P:cell differentiation"/>
    <property type="evidence" value="ECO:0007669"/>
    <property type="project" value="UniProtKB-KW"/>
</dbReference>
<dbReference type="GO" id="GO:0007517">
    <property type="term" value="P:muscle organ development"/>
    <property type="evidence" value="ECO:0007669"/>
    <property type="project" value="UniProtKB-KW"/>
</dbReference>
<dbReference type="GO" id="GO:0045892">
    <property type="term" value="P:negative regulation of DNA-templated transcription"/>
    <property type="evidence" value="ECO:0000318"/>
    <property type="project" value="GO_Central"/>
</dbReference>
<dbReference type="InterPro" id="IPR033258">
    <property type="entry name" value="EID"/>
</dbReference>
<dbReference type="PANTHER" id="PTHR15556:SF3">
    <property type="entry name" value="EP300-INTERACTING INHIBITOR OF DIFFERENTIATION 2"/>
    <property type="match status" value="1"/>
</dbReference>
<dbReference type="PANTHER" id="PTHR15556">
    <property type="entry name" value="EP300-INTERACTING INHIBITOR OF DIFFERENTIATION 2-RELATED"/>
    <property type="match status" value="1"/>
</dbReference>
<organism>
    <name type="scientific">Bos taurus</name>
    <name type="common">Bovine</name>
    <dbReference type="NCBI Taxonomy" id="9913"/>
    <lineage>
        <taxon>Eukaryota</taxon>
        <taxon>Metazoa</taxon>
        <taxon>Chordata</taxon>
        <taxon>Craniata</taxon>
        <taxon>Vertebrata</taxon>
        <taxon>Euteleostomi</taxon>
        <taxon>Mammalia</taxon>
        <taxon>Eutheria</taxon>
        <taxon>Laurasiatheria</taxon>
        <taxon>Artiodactyla</taxon>
        <taxon>Ruminantia</taxon>
        <taxon>Pecora</taxon>
        <taxon>Bovidae</taxon>
        <taxon>Bovinae</taxon>
        <taxon>Bos</taxon>
    </lineage>
</organism>
<keyword id="KW-0217">Developmental protein</keyword>
<keyword id="KW-0221">Differentiation</keyword>
<keyword id="KW-0488">Methylation</keyword>
<keyword id="KW-0517">Myogenesis</keyword>
<keyword id="KW-0539">Nucleus</keyword>
<keyword id="KW-1185">Reference proteome</keyword>
<keyword id="KW-0678">Repressor</keyword>
<keyword id="KW-0804">Transcription</keyword>
<keyword id="KW-0805">Transcription regulation</keyword>
<protein>
    <recommendedName>
        <fullName>EP300-interacting inhibitor of differentiation 2</fullName>
        <shortName>EID-2</shortName>
    </recommendedName>
    <alternativeName>
        <fullName>CREBBP/EP300 inhibitor 2</fullName>
    </alternativeName>
    <alternativeName>
        <fullName>EID-1-like inhibitor of differentiation 2</fullName>
    </alternativeName>
</protein>
<gene>
    <name evidence="3" type="primary">EID2</name>
</gene>
<evidence type="ECO:0000250" key="1">
    <source>
        <dbReference type="UniProtKB" id="Q8N6I1"/>
    </source>
</evidence>
<evidence type="ECO:0000256" key="2">
    <source>
        <dbReference type="SAM" id="MobiDB-lite"/>
    </source>
</evidence>
<evidence type="ECO:0000312" key="3">
    <source>
        <dbReference type="EMBL" id="AAI18144.1"/>
    </source>
</evidence>